<dbReference type="EMBL" id="AK057502">
    <property type="protein sequence ID" value="BAB71513.1"/>
    <property type="molecule type" value="mRNA"/>
</dbReference>
<dbReference type="EMBL" id="AK058167">
    <property type="protein sequence ID" value="BAB71698.1"/>
    <property type="molecule type" value="mRNA"/>
</dbReference>
<dbReference type="EMBL" id="BX647935">
    <property type="protein sequence ID" value="CAH10571.1"/>
    <property type="status" value="ALT_FRAME"/>
    <property type="molecule type" value="mRNA"/>
</dbReference>
<dbReference type="EMBL" id="AL160286">
    <property type="status" value="NOT_ANNOTATED_CDS"/>
    <property type="molecule type" value="Genomic_DNA"/>
</dbReference>
<dbReference type="EMBL" id="AL451075">
    <property type="status" value="NOT_ANNOTATED_CDS"/>
    <property type="molecule type" value="Genomic_DNA"/>
</dbReference>
<dbReference type="CCDS" id="CCDS30948.1">
    <molecule id="Q5T1B0-1"/>
</dbReference>
<dbReference type="RefSeq" id="NP_653297.3">
    <molecule id="Q5T1B0-1"/>
    <property type="nucleotide sequence ID" value="NM_144696.5"/>
</dbReference>
<dbReference type="SMR" id="Q5T1B0"/>
<dbReference type="BioGRID" id="126021">
    <property type="interactions" value="10"/>
</dbReference>
<dbReference type="FunCoup" id="Q5T1B0">
    <property type="interactions" value="42"/>
</dbReference>
<dbReference type="IntAct" id="Q5T1B0">
    <property type="interactions" value="9"/>
</dbReference>
<dbReference type="STRING" id="9606.ENSP00000356590"/>
<dbReference type="GlyGen" id="Q5T1B0">
    <property type="glycosylation" value="1 site, 1 O-linked glycan (1 site)"/>
</dbReference>
<dbReference type="iPTMnet" id="Q5T1B0"/>
<dbReference type="PhosphoSitePlus" id="Q5T1B0"/>
<dbReference type="BioMuta" id="AXDND1"/>
<dbReference type="DMDM" id="74744440"/>
<dbReference type="jPOST" id="Q5T1B0"/>
<dbReference type="MassIVE" id="Q5T1B0"/>
<dbReference type="PaxDb" id="9606-ENSP00000356590"/>
<dbReference type="PeptideAtlas" id="Q5T1B0"/>
<dbReference type="ProteomicsDB" id="64252">
    <molecule id="Q5T1B0-1"/>
</dbReference>
<dbReference type="ProteomicsDB" id="64253">
    <molecule id="Q5T1B0-2"/>
</dbReference>
<dbReference type="ProteomicsDB" id="64254">
    <molecule id="Q5T1B0-3"/>
</dbReference>
<dbReference type="Antibodypedia" id="50119">
    <property type="antibodies" value="39 antibodies from 9 providers"/>
</dbReference>
<dbReference type="DNASU" id="126859"/>
<dbReference type="Ensembl" id="ENST00000367618.8">
    <molecule id="Q5T1B0-1"/>
    <property type="protein sequence ID" value="ENSP00000356590.3"/>
    <property type="gene ID" value="ENSG00000162779.22"/>
</dbReference>
<dbReference type="GeneID" id="126859"/>
<dbReference type="KEGG" id="hsa:126859"/>
<dbReference type="MANE-Select" id="ENST00000367618.8">
    <property type="protein sequence ID" value="ENSP00000356590.3"/>
    <property type="RefSeq nucleotide sequence ID" value="NM_144696.6"/>
    <property type="RefSeq protein sequence ID" value="NP_653297.3"/>
</dbReference>
<dbReference type="UCSC" id="uc001gmo.3">
    <molecule id="Q5T1B0-1"/>
    <property type="organism name" value="human"/>
</dbReference>
<dbReference type="AGR" id="HGNC:26564"/>
<dbReference type="CTD" id="126859"/>
<dbReference type="DisGeNET" id="126859"/>
<dbReference type="GeneCards" id="AXDND1"/>
<dbReference type="HGNC" id="HGNC:26564">
    <property type="gene designation" value="AXDND1"/>
</dbReference>
<dbReference type="HPA" id="ENSG00000162779">
    <property type="expression patterns" value="Tissue enriched (testis)"/>
</dbReference>
<dbReference type="MalaCards" id="AXDND1"/>
<dbReference type="neXtProt" id="NX_Q5T1B0"/>
<dbReference type="OpenTargets" id="ENSG00000162779"/>
<dbReference type="PharmGKB" id="PA142672443"/>
<dbReference type="VEuPathDB" id="HostDB:ENSG00000162779"/>
<dbReference type="eggNOG" id="ENOG502QSV4">
    <property type="taxonomic scope" value="Eukaryota"/>
</dbReference>
<dbReference type="GeneTree" id="ENSGT00390000005554"/>
<dbReference type="InParanoid" id="Q5T1B0"/>
<dbReference type="OMA" id="KKECYEW"/>
<dbReference type="OrthoDB" id="1927454at2759"/>
<dbReference type="PAN-GO" id="Q5T1B0">
    <property type="GO annotations" value="0 GO annotations based on evolutionary models"/>
</dbReference>
<dbReference type="PhylomeDB" id="Q5T1B0"/>
<dbReference type="TreeFam" id="TF314891"/>
<dbReference type="PathwayCommons" id="Q5T1B0"/>
<dbReference type="SignaLink" id="Q5T1B0"/>
<dbReference type="BioGRID-ORCS" id="126859">
    <property type="hits" value="11 hits in 1147 CRISPR screens"/>
</dbReference>
<dbReference type="ChiTaRS" id="AXDND1">
    <property type="organism name" value="human"/>
</dbReference>
<dbReference type="GenomeRNAi" id="126859"/>
<dbReference type="Pharos" id="Q5T1B0">
    <property type="development level" value="Tdark"/>
</dbReference>
<dbReference type="PRO" id="PR:Q5T1B0"/>
<dbReference type="Proteomes" id="UP000005640">
    <property type="component" value="Chromosome 1"/>
</dbReference>
<dbReference type="RNAct" id="Q5T1B0">
    <property type="molecule type" value="protein"/>
</dbReference>
<dbReference type="Bgee" id="ENSG00000162779">
    <property type="expression patterns" value="Expressed in sperm and 108 other cell types or tissues"/>
</dbReference>
<dbReference type="ExpressionAtlas" id="Q5T1B0">
    <property type="expression patterns" value="baseline and differential"/>
</dbReference>
<dbReference type="GO" id="GO:0036064">
    <property type="term" value="C:ciliary basal body"/>
    <property type="evidence" value="ECO:0000314"/>
    <property type="project" value="HPA"/>
</dbReference>
<dbReference type="GO" id="GO:0005929">
    <property type="term" value="C:cilium"/>
    <property type="evidence" value="ECO:0000314"/>
    <property type="project" value="HPA"/>
</dbReference>
<dbReference type="GO" id="GO:0005737">
    <property type="term" value="C:cytoplasm"/>
    <property type="evidence" value="ECO:0000314"/>
    <property type="project" value="UniProtKB"/>
</dbReference>
<dbReference type="GO" id="GO:0005829">
    <property type="term" value="C:cytosol"/>
    <property type="evidence" value="ECO:0000314"/>
    <property type="project" value="HPA"/>
</dbReference>
<dbReference type="GO" id="GO:1905198">
    <property type="term" value="P:manchette assembly"/>
    <property type="evidence" value="ECO:0000250"/>
    <property type="project" value="UniProtKB"/>
</dbReference>
<dbReference type="GO" id="GO:0007283">
    <property type="term" value="P:spermatogenesis"/>
    <property type="evidence" value="ECO:0000250"/>
    <property type="project" value="UniProtKB"/>
</dbReference>
<dbReference type="InterPro" id="IPR052845">
    <property type="entry name" value="Axonemal_dynein_LC_domain"/>
</dbReference>
<dbReference type="InterPro" id="IPR019347">
    <property type="entry name" value="Axonemal_dynein_light_chain"/>
</dbReference>
<dbReference type="PANTHER" id="PTHR23052">
    <property type="entry name" value="AXONEMAL DYNEIN LIGHT CHAIN DOMAIN-CONTAINING PROTEIN 1"/>
    <property type="match status" value="1"/>
</dbReference>
<dbReference type="PANTHER" id="PTHR23052:SF1">
    <property type="entry name" value="AXONEMAL DYNEIN LIGHT CHAIN DOMAIN-CONTAINING PROTEIN 1"/>
    <property type="match status" value="1"/>
</dbReference>
<dbReference type="Pfam" id="PF10211">
    <property type="entry name" value="Ax_dynein_light"/>
    <property type="match status" value="1"/>
</dbReference>
<reference key="1">
    <citation type="journal article" date="2004" name="Nat. Genet.">
        <title>Complete sequencing and characterization of 21,243 full-length human cDNAs.</title>
        <authorList>
            <person name="Ota T."/>
            <person name="Suzuki Y."/>
            <person name="Nishikawa T."/>
            <person name="Otsuki T."/>
            <person name="Sugiyama T."/>
            <person name="Irie R."/>
            <person name="Wakamatsu A."/>
            <person name="Hayashi K."/>
            <person name="Sato H."/>
            <person name="Nagai K."/>
            <person name="Kimura K."/>
            <person name="Makita H."/>
            <person name="Sekine M."/>
            <person name="Obayashi M."/>
            <person name="Nishi T."/>
            <person name="Shibahara T."/>
            <person name="Tanaka T."/>
            <person name="Ishii S."/>
            <person name="Yamamoto J."/>
            <person name="Saito K."/>
            <person name="Kawai Y."/>
            <person name="Isono Y."/>
            <person name="Nakamura Y."/>
            <person name="Nagahari K."/>
            <person name="Murakami K."/>
            <person name="Yasuda T."/>
            <person name="Iwayanagi T."/>
            <person name="Wagatsuma M."/>
            <person name="Shiratori A."/>
            <person name="Sudo H."/>
            <person name="Hosoiri T."/>
            <person name="Kaku Y."/>
            <person name="Kodaira H."/>
            <person name="Kondo H."/>
            <person name="Sugawara M."/>
            <person name="Takahashi M."/>
            <person name="Kanda K."/>
            <person name="Yokoi T."/>
            <person name="Furuya T."/>
            <person name="Kikkawa E."/>
            <person name="Omura Y."/>
            <person name="Abe K."/>
            <person name="Kamihara K."/>
            <person name="Katsuta N."/>
            <person name="Sato K."/>
            <person name="Tanikawa M."/>
            <person name="Yamazaki M."/>
            <person name="Ninomiya K."/>
            <person name="Ishibashi T."/>
            <person name="Yamashita H."/>
            <person name="Murakawa K."/>
            <person name="Fujimori K."/>
            <person name="Tanai H."/>
            <person name="Kimata M."/>
            <person name="Watanabe M."/>
            <person name="Hiraoka S."/>
            <person name="Chiba Y."/>
            <person name="Ishida S."/>
            <person name="Ono Y."/>
            <person name="Takiguchi S."/>
            <person name="Watanabe S."/>
            <person name="Yosida M."/>
            <person name="Hotuta T."/>
            <person name="Kusano J."/>
            <person name="Kanehori K."/>
            <person name="Takahashi-Fujii A."/>
            <person name="Hara H."/>
            <person name="Tanase T.-O."/>
            <person name="Nomura Y."/>
            <person name="Togiya S."/>
            <person name="Komai F."/>
            <person name="Hara R."/>
            <person name="Takeuchi K."/>
            <person name="Arita M."/>
            <person name="Imose N."/>
            <person name="Musashino K."/>
            <person name="Yuuki H."/>
            <person name="Oshima A."/>
            <person name="Sasaki N."/>
            <person name="Aotsuka S."/>
            <person name="Yoshikawa Y."/>
            <person name="Matsunawa H."/>
            <person name="Ichihara T."/>
            <person name="Shiohata N."/>
            <person name="Sano S."/>
            <person name="Moriya S."/>
            <person name="Momiyama H."/>
            <person name="Satoh N."/>
            <person name="Takami S."/>
            <person name="Terashima Y."/>
            <person name="Suzuki O."/>
            <person name="Nakagawa S."/>
            <person name="Senoh A."/>
            <person name="Mizoguchi H."/>
            <person name="Goto Y."/>
            <person name="Shimizu F."/>
            <person name="Wakebe H."/>
            <person name="Hishigaki H."/>
            <person name="Watanabe T."/>
            <person name="Sugiyama A."/>
            <person name="Takemoto M."/>
            <person name="Kawakami B."/>
            <person name="Yamazaki M."/>
            <person name="Watanabe K."/>
            <person name="Kumagai A."/>
            <person name="Itakura S."/>
            <person name="Fukuzumi Y."/>
            <person name="Fujimori Y."/>
            <person name="Komiyama M."/>
            <person name="Tashiro H."/>
            <person name="Tanigami A."/>
            <person name="Fujiwara T."/>
            <person name="Ono T."/>
            <person name="Yamada K."/>
            <person name="Fujii Y."/>
            <person name="Ozaki K."/>
            <person name="Hirao M."/>
            <person name="Ohmori Y."/>
            <person name="Kawabata A."/>
            <person name="Hikiji T."/>
            <person name="Kobatake N."/>
            <person name="Inagaki H."/>
            <person name="Ikema Y."/>
            <person name="Okamoto S."/>
            <person name="Okitani R."/>
            <person name="Kawakami T."/>
            <person name="Noguchi S."/>
            <person name="Itoh T."/>
            <person name="Shigeta K."/>
            <person name="Senba T."/>
            <person name="Matsumura K."/>
            <person name="Nakajima Y."/>
            <person name="Mizuno T."/>
            <person name="Morinaga M."/>
            <person name="Sasaki M."/>
            <person name="Togashi T."/>
            <person name="Oyama M."/>
            <person name="Hata H."/>
            <person name="Watanabe M."/>
            <person name="Komatsu T."/>
            <person name="Mizushima-Sugano J."/>
            <person name="Satoh T."/>
            <person name="Shirai Y."/>
            <person name="Takahashi Y."/>
            <person name="Nakagawa K."/>
            <person name="Okumura K."/>
            <person name="Nagase T."/>
            <person name="Nomura N."/>
            <person name="Kikuchi H."/>
            <person name="Masuho Y."/>
            <person name="Yamashita R."/>
            <person name="Nakai K."/>
            <person name="Yada T."/>
            <person name="Nakamura Y."/>
            <person name="Ohara O."/>
            <person name="Isogai T."/>
            <person name="Sugano S."/>
        </authorList>
    </citation>
    <scope>NUCLEOTIDE SEQUENCE [LARGE SCALE MRNA] (ISOFORMS 2 AND 3)</scope>
    <source>
        <tissue>Testis</tissue>
    </source>
</reference>
<reference key="2">
    <citation type="journal article" date="2007" name="BMC Genomics">
        <title>The full-ORF clone resource of the German cDNA consortium.</title>
        <authorList>
            <person name="Bechtel S."/>
            <person name="Rosenfelder H."/>
            <person name="Duda A."/>
            <person name="Schmidt C.P."/>
            <person name="Ernst U."/>
            <person name="Wellenreuther R."/>
            <person name="Mehrle A."/>
            <person name="Schuster C."/>
            <person name="Bahr A."/>
            <person name="Bloecker H."/>
            <person name="Heubner D."/>
            <person name="Hoerlein A."/>
            <person name="Michel G."/>
            <person name="Wedler H."/>
            <person name="Koehrer K."/>
            <person name="Ottenwaelder B."/>
            <person name="Poustka A."/>
            <person name="Wiemann S."/>
            <person name="Schupp I."/>
        </authorList>
    </citation>
    <scope>NUCLEOTIDE SEQUENCE [LARGE SCALE MRNA] (ISOFORM 1)</scope>
    <source>
        <tissue>Testis</tissue>
    </source>
</reference>
<reference key="3">
    <citation type="journal article" date="2006" name="Nature">
        <title>The DNA sequence and biological annotation of human chromosome 1.</title>
        <authorList>
            <person name="Gregory S.G."/>
            <person name="Barlow K.F."/>
            <person name="McLay K.E."/>
            <person name="Kaul R."/>
            <person name="Swarbreck D."/>
            <person name="Dunham A."/>
            <person name="Scott C.E."/>
            <person name="Howe K.L."/>
            <person name="Woodfine K."/>
            <person name="Spencer C.C.A."/>
            <person name="Jones M.C."/>
            <person name="Gillson C."/>
            <person name="Searle S."/>
            <person name="Zhou Y."/>
            <person name="Kokocinski F."/>
            <person name="McDonald L."/>
            <person name="Evans R."/>
            <person name="Phillips K."/>
            <person name="Atkinson A."/>
            <person name="Cooper R."/>
            <person name="Jones C."/>
            <person name="Hall R.E."/>
            <person name="Andrews T.D."/>
            <person name="Lloyd C."/>
            <person name="Ainscough R."/>
            <person name="Almeida J.P."/>
            <person name="Ambrose K.D."/>
            <person name="Anderson F."/>
            <person name="Andrew R.W."/>
            <person name="Ashwell R.I.S."/>
            <person name="Aubin K."/>
            <person name="Babbage A.K."/>
            <person name="Bagguley C.L."/>
            <person name="Bailey J."/>
            <person name="Beasley H."/>
            <person name="Bethel G."/>
            <person name="Bird C.P."/>
            <person name="Bray-Allen S."/>
            <person name="Brown J.Y."/>
            <person name="Brown A.J."/>
            <person name="Buckley D."/>
            <person name="Burton J."/>
            <person name="Bye J."/>
            <person name="Carder C."/>
            <person name="Chapman J.C."/>
            <person name="Clark S.Y."/>
            <person name="Clarke G."/>
            <person name="Clee C."/>
            <person name="Cobley V."/>
            <person name="Collier R.E."/>
            <person name="Corby N."/>
            <person name="Coville G.J."/>
            <person name="Davies J."/>
            <person name="Deadman R."/>
            <person name="Dunn M."/>
            <person name="Earthrowl M."/>
            <person name="Ellington A.G."/>
            <person name="Errington H."/>
            <person name="Frankish A."/>
            <person name="Frankland J."/>
            <person name="French L."/>
            <person name="Garner P."/>
            <person name="Garnett J."/>
            <person name="Gay L."/>
            <person name="Ghori M.R.J."/>
            <person name="Gibson R."/>
            <person name="Gilby L.M."/>
            <person name="Gillett W."/>
            <person name="Glithero R.J."/>
            <person name="Grafham D.V."/>
            <person name="Griffiths C."/>
            <person name="Griffiths-Jones S."/>
            <person name="Grocock R."/>
            <person name="Hammond S."/>
            <person name="Harrison E.S.I."/>
            <person name="Hart E."/>
            <person name="Haugen E."/>
            <person name="Heath P.D."/>
            <person name="Holmes S."/>
            <person name="Holt K."/>
            <person name="Howden P.J."/>
            <person name="Hunt A.R."/>
            <person name="Hunt S.E."/>
            <person name="Hunter G."/>
            <person name="Isherwood J."/>
            <person name="James R."/>
            <person name="Johnson C."/>
            <person name="Johnson D."/>
            <person name="Joy A."/>
            <person name="Kay M."/>
            <person name="Kershaw J.K."/>
            <person name="Kibukawa M."/>
            <person name="Kimberley A.M."/>
            <person name="King A."/>
            <person name="Knights A.J."/>
            <person name="Lad H."/>
            <person name="Laird G."/>
            <person name="Lawlor S."/>
            <person name="Leongamornlert D.A."/>
            <person name="Lloyd D.M."/>
            <person name="Loveland J."/>
            <person name="Lovell J."/>
            <person name="Lush M.J."/>
            <person name="Lyne R."/>
            <person name="Martin S."/>
            <person name="Mashreghi-Mohammadi M."/>
            <person name="Matthews L."/>
            <person name="Matthews N.S.W."/>
            <person name="McLaren S."/>
            <person name="Milne S."/>
            <person name="Mistry S."/>
            <person name="Moore M.J.F."/>
            <person name="Nickerson T."/>
            <person name="O'Dell C.N."/>
            <person name="Oliver K."/>
            <person name="Palmeiri A."/>
            <person name="Palmer S.A."/>
            <person name="Parker A."/>
            <person name="Patel D."/>
            <person name="Pearce A.V."/>
            <person name="Peck A.I."/>
            <person name="Pelan S."/>
            <person name="Phelps K."/>
            <person name="Phillimore B.J."/>
            <person name="Plumb R."/>
            <person name="Rajan J."/>
            <person name="Raymond C."/>
            <person name="Rouse G."/>
            <person name="Saenphimmachak C."/>
            <person name="Sehra H.K."/>
            <person name="Sheridan E."/>
            <person name="Shownkeen R."/>
            <person name="Sims S."/>
            <person name="Skuce C.D."/>
            <person name="Smith M."/>
            <person name="Steward C."/>
            <person name="Subramanian S."/>
            <person name="Sycamore N."/>
            <person name="Tracey A."/>
            <person name="Tromans A."/>
            <person name="Van Helmond Z."/>
            <person name="Wall M."/>
            <person name="Wallis J.M."/>
            <person name="White S."/>
            <person name="Whitehead S.L."/>
            <person name="Wilkinson J.E."/>
            <person name="Willey D.L."/>
            <person name="Williams H."/>
            <person name="Wilming L."/>
            <person name="Wray P.W."/>
            <person name="Wu Z."/>
            <person name="Coulson A."/>
            <person name="Vaudin M."/>
            <person name="Sulston J.E."/>
            <person name="Durbin R.M."/>
            <person name="Hubbard T."/>
            <person name="Wooster R."/>
            <person name="Dunham I."/>
            <person name="Carter N.P."/>
            <person name="McVean G."/>
            <person name="Ross M.T."/>
            <person name="Harrow J."/>
            <person name="Olson M.V."/>
            <person name="Beck S."/>
            <person name="Rogers J."/>
            <person name="Bentley D.R."/>
        </authorList>
    </citation>
    <scope>NUCLEOTIDE SEQUENCE [LARGE SCALE GENOMIC DNA]</scope>
</reference>
<reference key="4">
    <citation type="journal article" date="2021" name="Cell. Death. Discov.">
        <title>AXDND1, a novel testis-enriched gene, is required for spermiogenesis and male fertility.</title>
        <authorList>
            <person name="Ma Q."/>
            <person name="Cao C."/>
            <person name="Zhuang C."/>
            <person name="Luo X."/>
            <person name="Li X."/>
            <person name="Wan H."/>
            <person name="Ye J."/>
            <person name="Chen F."/>
            <person name="Cui L."/>
            <person name="Zhang Y."/>
            <person name="Wen Y."/>
            <person name="Yuan S."/>
            <person name="Gui Y."/>
        </authorList>
    </citation>
    <scope>TISSUE SPECIFICITY</scope>
    <scope>SUBCELLULAR LOCATION</scope>
    <scope>VARIANTS SER-82; CYS-95; ILE-134; THR-270; GLN-328; ARG-435; ARG-593; GLN-828 AND THR-925</scope>
    <scope>POSSIBLE INVOLVEMENT IN INFERTILITY</scope>
</reference>
<reference key="5">
    <citation type="journal article" date="2019" name="J. Proteome Res.">
        <title>Cell Type-Specific Expression of Testis Elevated Genes Based on Transcriptomics and Antibody-Based Proteomics.</title>
        <authorList>
            <person name="Pineau C."/>
            <person name="Hikmet F."/>
            <person name="Zhang C."/>
            <person name="Oksvold P."/>
            <person name="Chen S."/>
            <person name="Fagerberg L."/>
            <person name="Uhlen M."/>
            <person name="Lindskog C."/>
        </authorList>
    </citation>
    <scope>SUBCELLULAR LOCATION</scope>
</reference>
<protein>
    <recommendedName>
        <fullName>Axonemal dynein light chain domain-containing protein 1</fullName>
    </recommendedName>
</protein>
<sequence length="1012" mass="118027">MSLPKTPSTPLNSTSTSESKKLKVSVAKEGTRGLPELKEKKNMVDRSKLLPTSLQNEFIPKEVLLSLTYAANAGPCPENLLPPKKIKTPKGTLPRLVDHVWHHPVRRNKFKYLIDHPVSLTGAGRDISFLYDVTYAKGQTREKAVCPPHLARSLQSHDGVIVPHKPKTLTDTLIPEEFHIVSSTGVSGLECYDDKYTTLLTDSENRLLLFPSMKPNKRVEVAQLNDVMDTMLERAGVENQEYTGPTKMHKLLHILKKEQTIYNMIFHELIRQVSVDCADRGELLSKVRERYVQMLDQIARQMIDFYKDLVTQRVMDQRILEELYNFKHVIEELTRELCLVRAHDVKLTKETEKAHKDLAQALLNAEKNAKIVEEYHDLYTLQRERMENDMKKLVAERDIWSSATYELALKVIERNRVILARRLYLNEKGWNKYTKHFIILLSNKDTEDLALLQKLTQKWRNLVNKLKQEVEQMEESTSETLKIVKDGLIKWQEFFNEKDILSPNKGNIFNSVLLDFKQWQKILNEKKEEFTGDVLLSKYDTLKIIKHLQENWADIGLGIFNRHKSLEGEMPSERQYMEEIIKNIQKLYKEYEIRINGDNGYSKILPSLISSLDFCSFKLENLEFPDTPLEEWQEIDEKINEMKSHLDILLNLTGIVPQHIDVDSVSVLQAYIFNMIQQWLLKIGNEINNGNIELQHHMDELHISMIQWMVNLLILMIPNFTDQDCLLKLEEESAEKHDIGVARLELDAIELTRKLYQYSSYLSSCCKGMVTAMALSKSTNSHKNATEDLYEVDKLKKECYEWINTCSCLLSNIKGRKITLLTYEEIERLLEEEAVKEFIEPEIDESFKEDEEESKEDRKLQEENKERAEEQPSTSTEKEKLIRFIGEDENVHSKPLFETDVLSSWRESAKQGTLAQKYLEAMAVIEHMQEKLLEVENRARQAEEKFEDAYEKLHHTLIKNKDLEELVMTSRKESKEEKENQDEREVKEEEEQQEEEEVRSAENSSKSPKKGH</sequence>
<accession>Q5T1B0</accession>
<accession>Q6AWB2</accession>
<accession>Q96LJ3</accession>
<accession>Q96M01</accession>
<name>AXDN1_HUMAN</name>
<evidence type="ECO:0000250" key="1">
    <source>
        <dbReference type="UniProtKB" id="Q3UZ57"/>
    </source>
</evidence>
<evidence type="ECO:0000255" key="2"/>
<evidence type="ECO:0000256" key="3">
    <source>
        <dbReference type="SAM" id="MobiDB-lite"/>
    </source>
</evidence>
<evidence type="ECO:0000269" key="4">
    <source>
    </source>
</evidence>
<evidence type="ECO:0000269" key="5">
    <source>
    </source>
</evidence>
<evidence type="ECO:0000303" key="6">
    <source>
    </source>
</evidence>
<evidence type="ECO:0000305" key="7"/>
<evidence type="ECO:0000305" key="8">
    <source>
    </source>
</evidence>
<evidence type="ECO:0000312" key="9">
    <source>
        <dbReference type="HGNC" id="HGNC:26564"/>
    </source>
</evidence>
<gene>
    <name evidence="9" type="primary">AXDND1</name>
    <name type="synonym">C1orf125</name>
</gene>
<keyword id="KW-0025">Alternative splicing</keyword>
<keyword id="KW-0175">Coiled coil</keyword>
<keyword id="KW-0963">Cytoplasm</keyword>
<keyword id="KW-0221">Differentiation</keyword>
<keyword id="KW-0225">Disease variant</keyword>
<keyword id="KW-1267">Proteomics identification</keyword>
<keyword id="KW-1185">Reference proteome</keyword>
<keyword id="KW-0744">Spermatogenesis</keyword>
<comment type="function">
    <text evidence="1">May be essential for spermiogenesis and male fertility probably by regulating the manchette dynamics, spermatid head shaping and sperm flagellum assembly.</text>
</comment>
<comment type="subcellular location">
    <subcellularLocation>
        <location evidence="4 5">Cytoplasm</location>
    </subcellularLocation>
</comment>
<comment type="alternative products">
    <event type="alternative splicing"/>
    <isoform>
        <id>Q5T1B0-1</id>
        <name>1</name>
        <sequence type="displayed"/>
    </isoform>
    <isoform>
        <id>Q5T1B0-2</id>
        <name>2</name>
        <sequence type="described" ref="VSP_024704 VSP_024705 VSP_024706"/>
    </isoform>
    <isoform>
        <id>Q5T1B0-3</id>
        <name>3</name>
        <sequence type="described" ref="VSP_024703 VSP_024707 VSP_024708"/>
    </isoform>
</comment>
<comment type="tissue specificity">
    <text evidence="5">Highly expressed in testis. Highly expressed in the round and late spermatids.</text>
</comment>
<comment type="disease">
    <text evidence="8">Defects in this gene may be a cause of male infertility.</text>
</comment>
<comment type="sequence caution" evidence="7">
    <conflict type="frameshift">
        <sequence resource="EMBL-CDS" id="CAH10571"/>
    </conflict>
</comment>
<organism>
    <name type="scientific">Homo sapiens</name>
    <name type="common">Human</name>
    <dbReference type="NCBI Taxonomy" id="9606"/>
    <lineage>
        <taxon>Eukaryota</taxon>
        <taxon>Metazoa</taxon>
        <taxon>Chordata</taxon>
        <taxon>Craniata</taxon>
        <taxon>Vertebrata</taxon>
        <taxon>Euteleostomi</taxon>
        <taxon>Mammalia</taxon>
        <taxon>Eutheria</taxon>
        <taxon>Euarchontoglires</taxon>
        <taxon>Primates</taxon>
        <taxon>Haplorrhini</taxon>
        <taxon>Catarrhini</taxon>
        <taxon>Hominidae</taxon>
        <taxon>Homo</taxon>
    </lineage>
</organism>
<feature type="chain" id="PRO_0000284868" description="Axonemal dynein light chain domain-containing protein 1">
    <location>
        <begin position="1"/>
        <end position="1012"/>
    </location>
</feature>
<feature type="region of interest" description="Disordered" evidence="3">
    <location>
        <begin position="1"/>
        <end position="34"/>
    </location>
</feature>
<feature type="region of interest" description="Disordered" evidence="3">
    <location>
        <begin position="841"/>
        <end position="879"/>
    </location>
</feature>
<feature type="region of interest" description="Disordered" evidence="3">
    <location>
        <begin position="963"/>
        <end position="1012"/>
    </location>
</feature>
<feature type="coiled-coil region" evidence="2">
    <location>
        <begin position="317"/>
        <end position="402"/>
    </location>
</feature>
<feature type="coiled-coil region" evidence="2">
    <location>
        <begin position="447"/>
        <end position="486"/>
    </location>
</feature>
<feature type="coiled-coil region" evidence="2">
    <location>
        <begin position="572"/>
        <end position="597"/>
    </location>
</feature>
<feature type="compositionally biased region" description="Low complexity" evidence="3">
    <location>
        <begin position="1"/>
        <end position="17"/>
    </location>
</feature>
<feature type="compositionally biased region" description="Acidic residues" evidence="3">
    <location>
        <begin position="841"/>
        <end position="854"/>
    </location>
</feature>
<feature type="compositionally biased region" description="Basic and acidic residues" evidence="3">
    <location>
        <begin position="855"/>
        <end position="879"/>
    </location>
</feature>
<feature type="compositionally biased region" description="Basic and acidic residues" evidence="3">
    <location>
        <begin position="963"/>
        <end position="987"/>
    </location>
</feature>
<feature type="compositionally biased region" description="Acidic residues" evidence="3">
    <location>
        <begin position="988"/>
        <end position="997"/>
    </location>
</feature>
<feature type="splice variant" id="VSP_024703" description="In isoform 3." evidence="6">
    <location>
        <begin position="1"/>
        <end position="768"/>
    </location>
</feature>
<feature type="splice variant" id="VSP_024704" description="In isoform 2." evidence="6">
    <location>
        <begin position="1"/>
        <end position="212"/>
    </location>
</feature>
<feature type="splice variant" id="VSP_024705" description="In isoform 2." evidence="6">
    <original>GYSKILPSLISSLDFCSFKLENLEFPDTPLEEWQEIDEKINEMKSHLDILLNLTGI</original>
    <variation>ETGSHRVAQAGLKLLGSSDHPTSAPQSAGIRGIIHRTWPWVNFYIVCEVTPKFFQV</variation>
    <location>
        <begin position="600"/>
        <end position="655"/>
    </location>
</feature>
<feature type="splice variant" id="VSP_024706" description="In isoform 2." evidence="6">
    <location>
        <begin position="656"/>
        <end position="1012"/>
    </location>
</feature>
<feature type="splice variant" id="VSP_024707" description="In isoform 3." evidence="6">
    <original>RES</original>
    <variation>KKV</variation>
    <location>
        <begin position="906"/>
        <end position="908"/>
    </location>
</feature>
<feature type="splice variant" id="VSP_024708" description="In isoform 3." evidence="6">
    <location>
        <begin position="909"/>
        <end position="1012"/>
    </location>
</feature>
<feature type="sequence variant" id="VAR_088327" description="Found in non-obstructive azoospermia in one patient; uncertain significance; dbSNP:rs201929957." evidence="5">
    <original>P</original>
    <variation>S</variation>
    <location>
        <position position="82"/>
    </location>
</feature>
<feature type="sequence variant" id="VAR_088328" description="Found in non-obstructive azoospermia in one patient; uncertain significance; dbSNP:rs749525444." evidence="5">
    <original>R</original>
    <variation>C</variation>
    <location>
        <position position="95"/>
    </location>
</feature>
<feature type="sequence variant" id="VAR_088329" description="Found in non-obstructive azoospermia in one patient; uncertain significance." evidence="5">
    <original>T</original>
    <variation>I</variation>
    <location>
        <position position="134"/>
    </location>
</feature>
<feature type="sequence variant" id="VAR_088330" description="Found in non-obstructive azoospermia in one patient; uncertain significance; dbSNP:rs368746160." evidence="5">
    <original>I</original>
    <variation>T</variation>
    <location>
        <position position="270"/>
    </location>
</feature>
<feature type="sequence variant" id="VAR_088331" description="Found in non-obstructive azoospermia in one patient; uncertain significance; dbSNP:rs571709171." evidence="5">
    <original>H</original>
    <variation>Q</variation>
    <location>
        <position position="328"/>
    </location>
</feature>
<feature type="sequence variant" id="VAR_088332" description="Found in non-obstructive azoospermia in one patient; uncertain significance; dbSNP:rs150583143." evidence="5">
    <original>K</original>
    <variation>R</variation>
    <location>
        <position position="435"/>
    </location>
</feature>
<feature type="sequence variant" id="VAR_050705" description="In dbSNP:rs11577579.">
    <original>I</original>
    <variation>L</variation>
    <location>
        <position position="522"/>
    </location>
</feature>
<feature type="sequence variant" id="VAR_088333" description="Found in non-obstructive azoospermia in one patient; uncertain significance." evidence="5">
    <original>I</original>
    <variation>R</variation>
    <location>
        <position position="593"/>
    </location>
</feature>
<feature type="sequence variant" id="VAR_031841" description="In dbSNP:rs17369441.">
    <original>A</original>
    <variation>V</variation>
    <location>
        <position position="742"/>
    </location>
</feature>
<feature type="sequence variant" id="VAR_088334" description="Found in non-obstructive azoospermia in one patient; uncertain significance; dbSNP:rs202143471." evidence="5">
    <original>R</original>
    <variation>Q</variation>
    <location>
        <position position="828"/>
    </location>
</feature>
<feature type="sequence variant" id="VAR_088335" description="Found in non-obstructive azoospermia in one patient; uncertain significance; dbSNP:rs201462871." evidence="5">
    <original>I</original>
    <variation>T</variation>
    <location>
        <position position="925"/>
    </location>
</feature>
<feature type="sequence variant" id="VAR_031842" description="In dbSNP:rs6425573.">
    <original>E</original>
    <variation>Q</variation>
    <location>
        <position position="991"/>
    </location>
</feature>
<feature type="sequence variant" id="VAR_050706" description="In dbSNP:rs6658180.">
    <original>Q</original>
    <variation>E</variation>
    <location>
        <position position="993"/>
    </location>
</feature>
<proteinExistence type="evidence at protein level"/>